<organism>
    <name type="scientific">Pelodictyon phaeoclathratiforme (strain DSM 5477 / BU-1)</name>
    <dbReference type="NCBI Taxonomy" id="324925"/>
    <lineage>
        <taxon>Bacteria</taxon>
        <taxon>Pseudomonadati</taxon>
        <taxon>Chlorobiota</taxon>
        <taxon>Chlorobiia</taxon>
        <taxon>Chlorobiales</taxon>
        <taxon>Chlorobiaceae</taxon>
        <taxon>Chlorobium/Pelodictyon group</taxon>
        <taxon>Pelodictyon</taxon>
    </lineage>
</organism>
<name>LPXK_PELPB</name>
<dbReference type="EC" id="2.7.1.130" evidence="1"/>
<dbReference type="EMBL" id="CP001110">
    <property type="protein sequence ID" value="ACF42944.1"/>
    <property type="molecule type" value="Genomic_DNA"/>
</dbReference>
<dbReference type="RefSeq" id="WP_012507439.1">
    <property type="nucleotide sequence ID" value="NC_011060.1"/>
</dbReference>
<dbReference type="SMR" id="B4SDV3"/>
<dbReference type="STRING" id="324925.Ppha_0645"/>
<dbReference type="KEGG" id="pph:Ppha_0645"/>
<dbReference type="eggNOG" id="COG1663">
    <property type="taxonomic scope" value="Bacteria"/>
</dbReference>
<dbReference type="HOGENOM" id="CLU_038816_6_0_10"/>
<dbReference type="OrthoDB" id="9766423at2"/>
<dbReference type="UniPathway" id="UPA00359">
    <property type="reaction ID" value="UER00482"/>
</dbReference>
<dbReference type="Proteomes" id="UP000002724">
    <property type="component" value="Chromosome"/>
</dbReference>
<dbReference type="GO" id="GO:0005886">
    <property type="term" value="C:plasma membrane"/>
    <property type="evidence" value="ECO:0007669"/>
    <property type="project" value="TreeGrafter"/>
</dbReference>
<dbReference type="GO" id="GO:0005524">
    <property type="term" value="F:ATP binding"/>
    <property type="evidence" value="ECO:0007669"/>
    <property type="project" value="UniProtKB-UniRule"/>
</dbReference>
<dbReference type="GO" id="GO:0009029">
    <property type="term" value="F:tetraacyldisaccharide 4'-kinase activity"/>
    <property type="evidence" value="ECO:0007669"/>
    <property type="project" value="UniProtKB-UniRule"/>
</dbReference>
<dbReference type="GO" id="GO:0009245">
    <property type="term" value="P:lipid A biosynthetic process"/>
    <property type="evidence" value="ECO:0007669"/>
    <property type="project" value="UniProtKB-UniRule"/>
</dbReference>
<dbReference type="GO" id="GO:0009244">
    <property type="term" value="P:lipopolysaccharide core region biosynthetic process"/>
    <property type="evidence" value="ECO:0007669"/>
    <property type="project" value="TreeGrafter"/>
</dbReference>
<dbReference type="HAMAP" id="MF_00409">
    <property type="entry name" value="LpxK"/>
    <property type="match status" value="1"/>
</dbReference>
<dbReference type="InterPro" id="IPR003758">
    <property type="entry name" value="LpxK"/>
</dbReference>
<dbReference type="InterPro" id="IPR027417">
    <property type="entry name" value="P-loop_NTPase"/>
</dbReference>
<dbReference type="NCBIfam" id="TIGR00682">
    <property type="entry name" value="lpxK"/>
    <property type="match status" value="1"/>
</dbReference>
<dbReference type="PANTHER" id="PTHR42724">
    <property type="entry name" value="TETRAACYLDISACCHARIDE 4'-KINASE"/>
    <property type="match status" value="1"/>
</dbReference>
<dbReference type="PANTHER" id="PTHR42724:SF1">
    <property type="entry name" value="TETRAACYLDISACCHARIDE 4'-KINASE, MITOCHONDRIAL-RELATED"/>
    <property type="match status" value="1"/>
</dbReference>
<dbReference type="Pfam" id="PF02606">
    <property type="entry name" value="LpxK"/>
    <property type="match status" value="1"/>
</dbReference>
<dbReference type="SUPFAM" id="SSF52540">
    <property type="entry name" value="P-loop containing nucleoside triphosphate hydrolases"/>
    <property type="match status" value="1"/>
</dbReference>
<comment type="function">
    <text evidence="1">Transfers the gamma-phosphate of ATP to the 4'-position of a tetraacyldisaccharide 1-phosphate intermediate (termed DS-1-P) to form tetraacyldisaccharide 1,4'-bis-phosphate (lipid IVA).</text>
</comment>
<comment type="catalytic activity">
    <reaction evidence="1">
        <text>a lipid A disaccharide + ATP = a lipid IVA + ADP + H(+)</text>
        <dbReference type="Rhea" id="RHEA:67840"/>
        <dbReference type="ChEBI" id="CHEBI:15378"/>
        <dbReference type="ChEBI" id="CHEBI:30616"/>
        <dbReference type="ChEBI" id="CHEBI:176343"/>
        <dbReference type="ChEBI" id="CHEBI:176425"/>
        <dbReference type="ChEBI" id="CHEBI:456216"/>
        <dbReference type="EC" id="2.7.1.130"/>
    </reaction>
</comment>
<comment type="pathway">
    <text evidence="1">Glycolipid biosynthesis; lipid IV(A) biosynthesis; lipid IV(A) from (3R)-3-hydroxytetradecanoyl-[acyl-carrier-protein] and UDP-N-acetyl-alpha-D-glucosamine: step 6/6.</text>
</comment>
<comment type="similarity">
    <text evidence="1">Belongs to the LpxK family.</text>
</comment>
<proteinExistence type="inferred from homology"/>
<gene>
    <name evidence="1" type="primary">lpxK</name>
    <name type="ordered locus">Ppha_0645</name>
</gene>
<keyword id="KW-0067">ATP-binding</keyword>
<keyword id="KW-0418">Kinase</keyword>
<keyword id="KW-0441">Lipid A biosynthesis</keyword>
<keyword id="KW-0444">Lipid biosynthesis</keyword>
<keyword id="KW-0443">Lipid metabolism</keyword>
<keyword id="KW-0547">Nucleotide-binding</keyword>
<keyword id="KW-1185">Reference proteome</keyword>
<keyword id="KW-0808">Transferase</keyword>
<evidence type="ECO:0000255" key="1">
    <source>
        <dbReference type="HAMAP-Rule" id="MF_00409"/>
    </source>
</evidence>
<protein>
    <recommendedName>
        <fullName evidence="1">Tetraacyldisaccharide 4'-kinase</fullName>
        <ecNumber evidence="1">2.7.1.130</ecNumber>
    </recommendedName>
    <alternativeName>
        <fullName evidence="1">Lipid A 4'-kinase</fullName>
    </alternativeName>
</protein>
<reference key="1">
    <citation type="submission" date="2008-06" db="EMBL/GenBank/DDBJ databases">
        <title>Complete sequence of Pelodictyon phaeoclathratiforme BU-1.</title>
        <authorList>
            <consortium name="US DOE Joint Genome Institute"/>
            <person name="Lucas S."/>
            <person name="Copeland A."/>
            <person name="Lapidus A."/>
            <person name="Glavina del Rio T."/>
            <person name="Dalin E."/>
            <person name="Tice H."/>
            <person name="Bruce D."/>
            <person name="Goodwin L."/>
            <person name="Pitluck S."/>
            <person name="Schmutz J."/>
            <person name="Larimer F."/>
            <person name="Land M."/>
            <person name="Hauser L."/>
            <person name="Kyrpides N."/>
            <person name="Mikhailova N."/>
            <person name="Liu Z."/>
            <person name="Li T."/>
            <person name="Zhao F."/>
            <person name="Overmann J."/>
            <person name="Bryant D.A."/>
            <person name="Richardson P."/>
        </authorList>
    </citation>
    <scope>NUCLEOTIDE SEQUENCE [LARGE SCALE GENOMIC DNA]</scope>
    <source>
        <strain>DSM 5477 / BU-1</strain>
    </source>
</reference>
<accession>B4SDV3</accession>
<feature type="chain" id="PRO_1000123725" description="Tetraacyldisaccharide 4'-kinase">
    <location>
        <begin position="1"/>
        <end position="355"/>
    </location>
</feature>
<feature type="binding site" evidence="1">
    <location>
        <begin position="48"/>
        <end position="55"/>
    </location>
    <ligand>
        <name>ATP</name>
        <dbReference type="ChEBI" id="CHEBI:30616"/>
    </ligand>
</feature>
<sequence length="355" mass="39655">MHNPLSILLRPAALGYRVIVQLRNTLFDRQLLPAWKSPVPIVSIGNLSVGGTGKTPLVDWVVKYYLSIGCKPAIISRGYRRESKGVQLVSDGQKVLLSSSESGDETAMLAWNNPDAIVIVAKKRKEAVKYLVKHFAARMPSVIILDDAFQHRQIQRELNIAIINVSEPFLKARMLPEGRMREPLKNLSRADLIVLNKIDDPEKADAIVRKIKERGTPLIKARVAIAELVCFSGAFISSEEAPPLTSISALAFAGISSPQSFLDSLGKEGVTIAAHRFFYDHEPYSAKKLTEIFREAESKGLSLITTEKDYFRMLGHPELIRIITARPCYYLKIKTDIFEGKEILQSMLRKAVAMK</sequence>